<dbReference type="EC" id="2.5.1.145" evidence="1"/>
<dbReference type="EMBL" id="CP001581">
    <property type="protein sequence ID" value="ACO85973.1"/>
    <property type="molecule type" value="Genomic_DNA"/>
</dbReference>
<dbReference type="RefSeq" id="WP_012048192.1">
    <property type="nucleotide sequence ID" value="NC_012563.1"/>
</dbReference>
<dbReference type="SMR" id="C1FL83"/>
<dbReference type="GeneID" id="5187464"/>
<dbReference type="KEGG" id="cby:CLM_3620"/>
<dbReference type="eggNOG" id="COG0682">
    <property type="taxonomic scope" value="Bacteria"/>
</dbReference>
<dbReference type="HOGENOM" id="CLU_013386_0_1_9"/>
<dbReference type="UniPathway" id="UPA00664"/>
<dbReference type="Proteomes" id="UP000001374">
    <property type="component" value="Chromosome"/>
</dbReference>
<dbReference type="GO" id="GO:0005886">
    <property type="term" value="C:plasma membrane"/>
    <property type="evidence" value="ECO:0007669"/>
    <property type="project" value="UniProtKB-SubCell"/>
</dbReference>
<dbReference type="GO" id="GO:0008961">
    <property type="term" value="F:phosphatidylglycerol-prolipoprotein diacylglyceryl transferase activity"/>
    <property type="evidence" value="ECO:0007669"/>
    <property type="project" value="UniProtKB-UniRule"/>
</dbReference>
<dbReference type="GO" id="GO:0042158">
    <property type="term" value="P:lipoprotein biosynthetic process"/>
    <property type="evidence" value="ECO:0007669"/>
    <property type="project" value="UniProtKB-UniRule"/>
</dbReference>
<dbReference type="HAMAP" id="MF_01147">
    <property type="entry name" value="Lgt"/>
    <property type="match status" value="1"/>
</dbReference>
<dbReference type="InterPro" id="IPR001640">
    <property type="entry name" value="Lgt"/>
</dbReference>
<dbReference type="NCBIfam" id="TIGR00544">
    <property type="entry name" value="lgt"/>
    <property type="match status" value="1"/>
</dbReference>
<dbReference type="PANTHER" id="PTHR30589:SF0">
    <property type="entry name" value="PHOSPHATIDYLGLYCEROL--PROLIPOPROTEIN DIACYLGLYCERYL TRANSFERASE"/>
    <property type="match status" value="1"/>
</dbReference>
<dbReference type="PANTHER" id="PTHR30589">
    <property type="entry name" value="PROLIPOPROTEIN DIACYLGLYCERYL TRANSFERASE"/>
    <property type="match status" value="1"/>
</dbReference>
<dbReference type="Pfam" id="PF01790">
    <property type="entry name" value="LGT"/>
    <property type="match status" value="1"/>
</dbReference>
<dbReference type="PROSITE" id="PS01311">
    <property type="entry name" value="LGT"/>
    <property type="match status" value="1"/>
</dbReference>
<keyword id="KW-1003">Cell membrane</keyword>
<keyword id="KW-0472">Membrane</keyword>
<keyword id="KW-0808">Transferase</keyword>
<keyword id="KW-0812">Transmembrane</keyword>
<keyword id="KW-1133">Transmembrane helix</keyword>
<reference key="1">
    <citation type="submission" date="2008-10" db="EMBL/GenBank/DDBJ databases">
        <title>Genome sequence of Clostridium botulinum A2 Kyoto.</title>
        <authorList>
            <person name="Shrivastava S."/>
            <person name="Brinkac L.M."/>
            <person name="Brown J.L."/>
            <person name="Bruce D."/>
            <person name="Detter C.C."/>
            <person name="Johnson E.A."/>
            <person name="Munk C.A."/>
            <person name="Smith L.A."/>
            <person name="Smith T.J."/>
            <person name="Sutton G."/>
            <person name="Brettin T.S."/>
        </authorList>
    </citation>
    <scope>NUCLEOTIDE SEQUENCE [LARGE SCALE GENOMIC DNA]</scope>
    <source>
        <strain>Kyoto / Type A2</strain>
    </source>
</reference>
<organism>
    <name type="scientific">Clostridium botulinum (strain Kyoto / Type A2)</name>
    <dbReference type="NCBI Taxonomy" id="536232"/>
    <lineage>
        <taxon>Bacteria</taxon>
        <taxon>Bacillati</taxon>
        <taxon>Bacillota</taxon>
        <taxon>Clostridia</taxon>
        <taxon>Eubacteriales</taxon>
        <taxon>Clostridiaceae</taxon>
        <taxon>Clostridium</taxon>
    </lineage>
</organism>
<comment type="function">
    <text evidence="1">Catalyzes the transfer of the diacylglyceryl group from phosphatidylglycerol to the sulfhydryl group of the N-terminal cysteine of a prolipoprotein, the first step in the formation of mature lipoproteins.</text>
</comment>
<comment type="catalytic activity">
    <reaction evidence="1">
        <text>L-cysteinyl-[prolipoprotein] + a 1,2-diacyl-sn-glycero-3-phospho-(1'-sn-glycerol) = an S-1,2-diacyl-sn-glyceryl-L-cysteinyl-[prolipoprotein] + sn-glycerol 1-phosphate + H(+)</text>
        <dbReference type="Rhea" id="RHEA:56712"/>
        <dbReference type="Rhea" id="RHEA-COMP:14679"/>
        <dbReference type="Rhea" id="RHEA-COMP:14680"/>
        <dbReference type="ChEBI" id="CHEBI:15378"/>
        <dbReference type="ChEBI" id="CHEBI:29950"/>
        <dbReference type="ChEBI" id="CHEBI:57685"/>
        <dbReference type="ChEBI" id="CHEBI:64716"/>
        <dbReference type="ChEBI" id="CHEBI:140658"/>
        <dbReference type="EC" id="2.5.1.145"/>
    </reaction>
</comment>
<comment type="pathway">
    <text evidence="1">Protein modification; lipoprotein biosynthesis (diacylglyceryl transfer).</text>
</comment>
<comment type="subcellular location">
    <subcellularLocation>
        <location evidence="1">Cell membrane</location>
        <topology evidence="1">Multi-pass membrane protein</topology>
    </subcellularLocation>
</comment>
<comment type="similarity">
    <text evidence="1">Belongs to the Lgt family.</text>
</comment>
<evidence type="ECO:0000255" key="1">
    <source>
        <dbReference type="HAMAP-Rule" id="MF_01147"/>
    </source>
</evidence>
<sequence>MNPIAFHVGNLAIRWYGVIISMGTALGLLLAMYNCKIREASYDEFINMFLIAFPSAIIGARLYYVIFEFEDYRDNLINIFNTRQGGLAIHGGIIFGVLAVYIYLKYRKESFFEYVDVAAPSIILGQAIGRWGNFFNSEAHGGPVTKEFISKFPQFIQNGMFIEGTYYHPTFLYESIWNFIICIFLVYLLKKTKKKGIVFMAYIGLYSLGRFFIEGLRTDSLYLGSIRVAQLISVLGIILSIFFIYNIIKKEKRY</sequence>
<name>LGT_CLOBJ</name>
<feature type="chain" id="PRO_1000164134" description="Phosphatidylglycerol--prolipoprotein diacylglyceryl transferase">
    <location>
        <begin position="1"/>
        <end position="254"/>
    </location>
</feature>
<feature type="transmembrane region" description="Helical" evidence="1">
    <location>
        <begin position="11"/>
        <end position="31"/>
    </location>
</feature>
<feature type="transmembrane region" description="Helical" evidence="1">
    <location>
        <begin position="49"/>
        <end position="69"/>
    </location>
</feature>
<feature type="transmembrane region" description="Helical" evidence="1">
    <location>
        <begin position="84"/>
        <end position="104"/>
    </location>
</feature>
<feature type="transmembrane region" description="Helical" evidence="1">
    <location>
        <begin position="109"/>
        <end position="129"/>
    </location>
</feature>
<feature type="transmembrane region" description="Helical" evidence="1">
    <location>
        <begin position="169"/>
        <end position="189"/>
    </location>
</feature>
<feature type="transmembrane region" description="Helical" evidence="1">
    <location>
        <begin position="196"/>
        <end position="216"/>
    </location>
</feature>
<feature type="transmembrane region" description="Helical" evidence="1">
    <location>
        <begin position="228"/>
        <end position="248"/>
    </location>
</feature>
<feature type="binding site" evidence="1">
    <location>
        <position position="130"/>
    </location>
    <ligand>
        <name>a 1,2-diacyl-sn-glycero-3-phospho-(1'-sn-glycerol)</name>
        <dbReference type="ChEBI" id="CHEBI:64716"/>
    </ligand>
</feature>
<gene>
    <name evidence="1" type="primary">lgt</name>
    <name type="ordered locus">CLM_3620</name>
</gene>
<accession>C1FL83</accession>
<protein>
    <recommendedName>
        <fullName evidence="1">Phosphatidylglycerol--prolipoprotein diacylglyceryl transferase</fullName>
        <ecNumber evidence="1">2.5.1.145</ecNumber>
    </recommendedName>
</protein>
<proteinExistence type="inferred from homology"/>